<comment type="function">
    <text evidence="1">Multidrug efflux pump that functions probably as a Na(+)/drug antiporter.</text>
</comment>
<comment type="subcellular location">
    <subcellularLocation>
        <location evidence="1">Cell inner membrane</location>
        <topology evidence="1">Multi-pass membrane protein</topology>
    </subcellularLocation>
</comment>
<comment type="similarity">
    <text evidence="1">Belongs to the multi antimicrobial extrusion (MATE) (TC 2.A.66.1) family. MdtK subfamily.</text>
</comment>
<keyword id="KW-0050">Antiport</keyword>
<keyword id="KW-0997">Cell inner membrane</keyword>
<keyword id="KW-1003">Cell membrane</keyword>
<keyword id="KW-0406">Ion transport</keyword>
<keyword id="KW-0472">Membrane</keyword>
<keyword id="KW-0915">Sodium</keyword>
<keyword id="KW-0739">Sodium transport</keyword>
<keyword id="KW-0812">Transmembrane</keyword>
<keyword id="KW-1133">Transmembrane helix</keyword>
<keyword id="KW-0813">Transport</keyword>
<feature type="chain" id="PRO_1000134545" description="Multidrug resistance protein MdtK">
    <location>
        <begin position="1"/>
        <end position="457"/>
    </location>
</feature>
<feature type="transmembrane region" description="Helical" evidence="1">
    <location>
        <begin position="11"/>
        <end position="31"/>
    </location>
</feature>
<feature type="transmembrane region" description="Helical" evidence="1">
    <location>
        <begin position="53"/>
        <end position="73"/>
    </location>
</feature>
<feature type="transmembrane region" description="Helical" evidence="1">
    <location>
        <begin position="93"/>
        <end position="113"/>
    </location>
</feature>
<feature type="transmembrane region" description="Helical" evidence="1">
    <location>
        <begin position="127"/>
        <end position="147"/>
    </location>
</feature>
<feature type="transmembrane region" description="Helical" evidence="1">
    <location>
        <begin position="160"/>
        <end position="180"/>
    </location>
</feature>
<feature type="transmembrane region" description="Helical" evidence="1">
    <location>
        <begin position="189"/>
        <end position="209"/>
    </location>
</feature>
<feature type="transmembrane region" description="Helical" evidence="1">
    <location>
        <begin position="243"/>
        <end position="263"/>
    </location>
</feature>
<feature type="transmembrane region" description="Helical" evidence="1">
    <location>
        <begin position="276"/>
        <end position="296"/>
    </location>
</feature>
<feature type="transmembrane region" description="Helical" evidence="1">
    <location>
        <begin position="314"/>
        <end position="334"/>
    </location>
</feature>
<feature type="transmembrane region" description="Helical" evidence="1">
    <location>
        <begin position="350"/>
        <end position="370"/>
    </location>
</feature>
<feature type="transmembrane region" description="Helical" evidence="1">
    <location>
        <begin position="387"/>
        <end position="407"/>
    </location>
</feature>
<feature type="transmembrane region" description="Helical" evidence="1">
    <location>
        <begin position="418"/>
        <end position="438"/>
    </location>
</feature>
<protein>
    <recommendedName>
        <fullName evidence="1">Multidrug resistance protein MdtK</fullName>
    </recommendedName>
    <alternativeName>
        <fullName evidence="1">Multidrug-efflux transporter</fullName>
    </alternativeName>
</protein>
<gene>
    <name evidence="1" type="primary">mdtK</name>
    <name type="ordered locus">ECED1_1862</name>
</gene>
<sequence>MQKYISEARLLLALAIPVILAQIAQTAMGFVDTVMAGGYSATDMAAVAIGTSIWLPAILFGHGLLLALTPVIAQLNGSGRRERIAHQVRQGFWLAGFVSVLIMLVLWNAGYIIRSMENIDPALADKAVGYLRALLWGAPGYLFFQVARNQCEGLAKTKPGMVMGFIGLLVNIPVNYIFIYGHFGMPELGGVGCGVATAAVYWVMFLAMVSYIKRARSMRDIRNEKGTAKPDPAVMKRLIQLGLPIALALFFEVTLFAVVALLVSPLGIVDVAGHQIALNFSSLMFVLPMSLAAAVTIRVGYRLGQGSTLDAQTAARTGLMVGVCMATLTAIFTVSLREQIALLYNDNPEVVTLAAHLMLLAAVYQISDSIQVIGSGILRGYKDTRSIFYITFTAYWVLGLPSGYILALTDLVVEPMGPAGFWIGFIIGLTSAAIMMMLRMRFLQRLPSAIILQRASR</sequence>
<name>MDTK_ECO81</name>
<evidence type="ECO:0000255" key="1">
    <source>
        <dbReference type="HAMAP-Rule" id="MF_00400"/>
    </source>
</evidence>
<organism>
    <name type="scientific">Escherichia coli O81 (strain ED1a)</name>
    <dbReference type="NCBI Taxonomy" id="585397"/>
    <lineage>
        <taxon>Bacteria</taxon>
        <taxon>Pseudomonadati</taxon>
        <taxon>Pseudomonadota</taxon>
        <taxon>Gammaproteobacteria</taxon>
        <taxon>Enterobacterales</taxon>
        <taxon>Enterobacteriaceae</taxon>
        <taxon>Escherichia</taxon>
    </lineage>
</organism>
<proteinExistence type="inferred from homology"/>
<reference key="1">
    <citation type="journal article" date="2009" name="PLoS Genet.">
        <title>Organised genome dynamics in the Escherichia coli species results in highly diverse adaptive paths.</title>
        <authorList>
            <person name="Touchon M."/>
            <person name="Hoede C."/>
            <person name="Tenaillon O."/>
            <person name="Barbe V."/>
            <person name="Baeriswyl S."/>
            <person name="Bidet P."/>
            <person name="Bingen E."/>
            <person name="Bonacorsi S."/>
            <person name="Bouchier C."/>
            <person name="Bouvet O."/>
            <person name="Calteau A."/>
            <person name="Chiapello H."/>
            <person name="Clermont O."/>
            <person name="Cruveiller S."/>
            <person name="Danchin A."/>
            <person name="Diard M."/>
            <person name="Dossat C."/>
            <person name="Karoui M.E."/>
            <person name="Frapy E."/>
            <person name="Garry L."/>
            <person name="Ghigo J.M."/>
            <person name="Gilles A.M."/>
            <person name="Johnson J."/>
            <person name="Le Bouguenec C."/>
            <person name="Lescat M."/>
            <person name="Mangenot S."/>
            <person name="Martinez-Jehanne V."/>
            <person name="Matic I."/>
            <person name="Nassif X."/>
            <person name="Oztas S."/>
            <person name="Petit M.A."/>
            <person name="Pichon C."/>
            <person name="Rouy Z."/>
            <person name="Ruf C.S."/>
            <person name="Schneider D."/>
            <person name="Tourret J."/>
            <person name="Vacherie B."/>
            <person name="Vallenet D."/>
            <person name="Medigue C."/>
            <person name="Rocha E.P.C."/>
            <person name="Denamur E."/>
        </authorList>
    </citation>
    <scope>NUCLEOTIDE SEQUENCE [LARGE SCALE GENOMIC DNA]</scope>
    <source>
        <strain>ED1a</strain>
    </source>
</reference>
<dbReference type="EMBL" id="CU928162">
    <property type="protein sequence ID" value="CAR07959.1"/>
    <property type="molecule type" value="Genomic_DNA"/>
</dbReference>
<dbReference type="RefSeq" id="WP_001174940.1">
    <property type="nucleotide sequence ID" value="NC_011745.1"/>
</dbReference>
<dbReference type="SMR" id="B7MV43"/>
<dbReference type="KEGG" id="ecq:ECED1_1862"/>
<dbReference type="HOGENOM" id="CLU_012893_6_0_6"/>
<dbReference type="Proteomes" id="UP000000748">
    <property type="component" value="Chromosome"/>
</dbReference>
<dbReference type="GO" id="GO:0005886">
    <property type="term" value="C:plasma membrane"/>
    <property type="evidence" value="ECO:0007669"/>
    <property type="project" value="UniProtKB-SubCell"/>
</dbReference>
<dbReference type="GO" id="GO:0015297">
    <property type="term" value="F:antiporter activity"/>
    <property type="evidence" value="ECO:0007669"/>
    <property type="project" value="UniProtKB-UniRule"/>
</dbReference>
<dbReference type="GO" id="GO:0042910">
    <property type="term" value="F:xenobiotic transmembrane transporter activity"/>
    <property type="evidence" value="ECO:0007669"/>
    <property type="project" value="UniProtKB-UniRule"/>
</dbReference>
<dbReference type="GO" id="GO:0006814">
    <property type="term" value="P:sodium ion transport"/>
    <property type="evidence" value="ECO:0007669"/>
    <property type="project" value="UniProtKB-UniRule"/>
</dbReference>
<dbReference type="GO" id="GO:0006855">
    <property type="term" value="P:xenobiotic transmembrane transport"/>
    <property type="evidence" value="ECO:0007669"/>
    <property type="project" value="UniProtKB-UniRule"/>
</dbReference>
<dbReference type="CDD" id="cd13131">
    <property type="entry name" value="MATE_NorM_like"/>
    <property type="match status" value="1"/>
</dbReference>
<dbReference type="HAMAP" id="MF_00400">
    <property type="entry name" value="MdtK"/>
    <property type="match status" value="1"/>
</dbReference>
<dbReference type="InterPro" id="IPR002528">
    <property type="entry name" value="MATE_fam"/>
</dbReference>
<dbReference type="InterPro" id="IPR050222">
    <property type="entry name" value="MATE_MdtK"/>
</dbReference>
<dbReference type="InterPro" id="IPR048279">
    <property type="entry name" value="MdtK-like"/>
</dbReference>
<dbReference type="InterPro" id="IPR022913">
    <property type="entry name" value="Multidrug-R_MdtK"/>
</dbReference>
<dbReference type="NCBIfam" id="TIGR00797">
    <property type="entry name" value="matE"/>
    <property type="match status" value="1"/>
</dbReference>
<dbReference type="PANTHER" id="PTHR43298:SF2">
    <property type="entry name" value="FMN_FAD EXPORTER YEEO-RELATED"/>
    <property type="match status" value="1"/>
</dbReference>
<dbReference type="PANTHER" id="PTHR43298">
    <property type="entry name" value="MULTIDRUG RESISTANCE PROTEIN NORM-RELATED"/>
    <property type="match status" value="1"/>
</dbReference>
<dbReference type="Pfam" id="PF01554">
    <property type="entry name" value="MatE"/>
    <property type="match status" value="2"/>
</dbReference>
<dbReference type="PIRSF" id="PIRSF006603">
    <property type="entry name" value="DinF"/>
    <property type="match status" value="1"/>
</dbReference>
<accession>B7MV43</accession>